<organism>
    <name type="scientific">Geobacillus thermodenitrificans (strain NG80-2)</name>
    <dbReference type="NCBI Taxonomy" id="420246"/>
    <lineage>
        <taxon>Bacteria</taxon>
        <taxon>Bacillati</taxon>
        <taxon>Bacillota</taxon>
        <taxon>Bacilli</taxon>
        <taxon>Bacillales</taxon>
        <taxon>Anoxybacillaceae</taxon>
        <taxon>Geobacillus</taxon>
    </lineage>
</organism>
<keyword id="KW-0067">ATP-binding</keyword>
<keyword id="KW-0143">Chaperone</keyword>
<keyword id="KW-0547">Nucleotide-binding</keyword>
<keyword id="KW-0597">Phosphoprotein</keyword>
<keyword id="KW-0346">Stress response</keyword>
<protein>
    <recommendedName>
        <fullName evidence="1">Chaperone protein DnaK</fullName>
    </recommendedName>
    <alternativeName>
        <fullName evidence="1">HSP70</fullName>
    </alternativeName>
    <alternativeName>
        <fullName evidence="1">Heat shock 70 kDa protein</fullName>
    </alternativeName>
    <alternativeName>
        <fullName evidence="1">Heat shock protein 70</fullName>
    </alternativeName>
</protein>
<feature type="chain" id="PRO_1000059568" description="Chaperone protein DnaK">
    <location>
        <begin position="1"/>
        <end position="605"/>
    </location>
</feature>
<feature type="region of interest" description="Disordered" evidence="2">
    <location>
        <begin position="579"/>
        <end position="605"/>
    </location>
</feature>
<feature type="compositionally biased region" description="Acidic residues" evidence="2">
    <location>
        <begin position="594"/>
        <end position="605"/>
    </location>
</feature>
<feature type="modified residue" description="Phosphothreonine; by autocatalysis" evidence="1">
    <location>
        <position position="172"/>
    </location>
</feature>
<accession>A4IR31</accession>
<evidence type="ECO:0000255" key="1">
    <source>
        <dbReference type="HAMAP-Rule" id="MF_00332"/>
    </source>
</evidence>
<evidence type="ECO:0000256" key="2">
    <source>
        <dbReference type="SAM" id="MobiDB-lite"/>
    </source>
</evidence>
<proteinExistence type="inferred from homology"/>
<dbReference type="EMBL" id="CP000557">
    <property type="protein sequence ID" value="ABO67785.1"/>
    <property type="molecule type" value="Genomic_DNA"/>
</dbReference>
<dbReference type="RefSeq" id="WP_008879919.1">
    <property type="nucleotide sequence ID" value="NC_009328.1"/>
</dbReference>
<dbReference type="SMR" id="A4IR31"/>
<dbReference type="GeneID" id="87623412"/>
<dbReference type="KEGG" id="gtn:GTNG_2440"/>
<dbReference type="eggNOG" id="COG0443">
    <property type="taxonomic scope" value="Bacteria"/>
</dbReference>
<dbReference type="HOGENOM" id="CLU_005965_2_3_9"/>
<dbReference type="Proteomes" id="UP000001578">
    <property type="component" value="Chromosome"/>
</dbReference>
<dbReference type="GO" id="GO:0005524">
    <property type="term" value="F:ATP binding"/>
    <property type="evidence" value="ECO:0007669"/>
    <property type="project" value="UniProtKB-UniRule"/>
</dbReference>
<dbReference type="GO" id="GO:0140662">
    <property type="term" value="F:ATP-dependent protein folding chaperone"/>
    <property type="evidence" value="ECO:0007669"/>
    <property type="project" value="InterPro"/>
</dbReference>
<dbReference type="GO" id="GO:0051082">
    <property type="term" value="F:unfolded protein binding"/>
    <property type="evidence" value="ECO:0007669"/>
    <property type="project" value="InterPro"/>
</dbReference>
<dbReference type="CDD" id="cd10234">
    <property type="entry name" value="ASKHA_NBD_HSP70_DnaK-like"/>
    <property type="match status" value="1"/>
</dbReference>
<dbReference type="FunFam" id="2.60.34.10:FF:000014">
    <property type="entry name" value="Chaperone protein DnaK HSP70"/>
    <property type="match status" value="1"/>
</dbReference>
<dbReference type="FunFam" id="3.30.420.40:FF:000020">
    <property type="entry name" value="Chaperone protein HscA homolog"/>
    <property type="match status" value="1"/>
</dbReference>
<dbReference type="FunFam" id="3.30.420.40:FF:000545">
    <property type="entry name" value="Endoplasmic reticulum chaperone BiP"/>
    <property type="match status" value="1"/>
</dbReference>
<dbReference type="FunFam" id="1.20.1270.10:FF:000004">
    <property type="entry name" value="Molecular chaperone DnaK"/>
    <property type="match status" value="1"/>
</dbReference>
<dbReference type="FunFam" id="3.90.640.10:FF:000003">
    <property type="entry name" value="Molecular chaperone DnaK"/>
    <property type="match status" value="1"/>
</dbReference>
<dbReference type="Gene3D" id="1.20.1270.10">
    <property type="match status" value="1"/>
</dbReference>
<dbReference type="Gene3D" id="3.30.420.40">
    <property type="match status" value="2"/>
</dbReference>
<dbReference type="Gene3D" id="3.90.640.10">
    <property type="entry name" value="Actin, Chain A, domain 4"/>
    <property type="match status" value="1"/>
</dbReference>
<dbReference type="Gene3D" id="2.60.34.10">
    <property type="entry name" value="Substrate Binding Domain Of DNAk, Chain A, domain 1"/>
    <property type="match status" value="1"/>
</dbReference>
<dbReference type="HAMAP" id="MF_00332">
    <property type="entry name" value="DnaK"/>
    <property type="match status" value="1"/>
</dbReference>
<dbReference type="InterPro" id="IPR043129">
    <property type="entry name" value="ATPase_NBD"/>
</dbReference>
<dbReference type="InterPro" id="IPR012725">
    <property type="entry name" value="Chaperone_DnaK"/>
</dbReference>
<dbReference type="InterPro" id="IPR018181">
    <property type="entry name" value="Heat_shock_70_CS"/>
</dbReference>
<dbReference type="InterPro" id="IPR029048">
    <property type="entry name" value="HSP70_C_sf"/>
</dbReference>
<dbReference type="InterPro" id="IPR029047">
    <property type="entry name" value="HSP70_peptide-bd_sf"/>
</dbReference>
<dbReference type="InterPro" id="IPR013126">
    <property type="entry name" value="Hsp_70_fam"/>
</dbReference>
<dbReference type="NCBIfam" id="NF001413">
    <property type="entry name" value="PRK00290.1"/>
    <property type="match status" value="1"/>
</dbReference>
<dbReference type="NCBIfam" id="TIGR02350">
    <property type="entry name" value="prok_dnaK"/>
    <property type="match status" value="1"/>
</dbReference>
<dbReference type="PANTHER" id="PTHR19375">
    <property type="entry name" value="HEAT SHOCK PROTEIN 70KDA"/>
    <property type="match status" value="1"/>
</dbReference>
<dbReference type="Pfam" id="PF00012">
    <property type="entry name" value="HSP70"/>
    <property type="match status" value="1"/>
</dbReference>
<dbReference type="PRINTS" id="PR00301">
    <property type="entry name" value="HEATSHOCK70"/>
</dbReference>
<dbReference type="SUPFAM" id="SSF53067">
    <property type="entry name" value="Actin-like ATPase domain"/>
    <property type="match status" value="2"/>
</dbReference>
<dbReference type="SUPFAM" id="SSF100934">
    <property type="entry name" value="Heat shock protein 70kD (HSP70), C-terminal subdomain"/>
    <property type="match status" value="1"/>
</dbReference>
<dbReference type="SUPFAM" id="SSF100920">
    <property type="entry name" value="Heat shock protein 70kD (HSP70), peptide-binding domain"/>
    <property type="match status" value="1"/>
</dbReference>
<dbReference type="PROSITE" id="PS00297">
    <property type="entry name" value="HSP70_1"/>
    <property type="match status" value="1"/>
</dbReference>
<dbReference type="PROSITE" id="PS00329">
    <property type="entry name" value="HSP70_2"/>
    <property type="match status" value="1"/>
</dbReference>
<dbReference type="PROSITE" id="PS01036">
    <property type="entry name" value="HSP70_3"/>
    <property type="match status" value="1"/>
</dbReference>
<gene>
    <name evidence="1" type="primary">dnaK</name>
    <name type="ordered locus">GTNG_2440</name>
</gene>
<comment type="function">
    <text evidence="1">Acts as a chaperone.</text>
</comment>
<comment type="induction">
    <text evidence="1">By stress conditions e.g. heat shock.</text>
</comment>
<comment type="similarity">
    <text evidence="1">Belongs to the heat shock protein 70 family.</text>
</comment>
<reference key="1">
    <citation type="journal article" date="2007" name="Proc. Natl. Acad. Sci. U.S.A.">
        <title>Genome and proteome of long-chain alkane degrading Geobacillus thermodenitrificans NG80-2 isolated from a deep-subsurface oil reservoir.</title>
        <authorList>
            <person name="Feng L."/>
            <person name="Wang W."/>
            <person name="Cheng J."/>
            <person name="Ren Y."/>
            <person name="Zhao G."/>
            <person name="Gao C."/>
            <person name="Tang Y."/>
            <person name="Liu X."/>
            <person name="Han W."/>
            <person name="Peng X."/>
            <person name="Liu R."/>
            <person name="Wang L."/>
        </authorList>
    </citation>
    <scope>NUCLEOTIDE SEQUENCE [LARGE SCALE GENOMIC DNA]</scope>
    <source>
        <strain>NG80-2</strain>
    </source>
</reference>
<sequence length="605" mass="65588">MSKIIGIDLGTTNSCVAVLEGGEAKVIPNPEGSRTTPSVVAFKNGERLVGEVAKRQAITNPNTIISIKRHMGTDYKVEIEGKQYTPQEISAIILQYLKSYAEDYLGEPVTRAVITVPAYFNDAQRQATKDAGRIAGLEVERIINEPTAAALAYGLDKGEDQTILVYDLGGGTFDVSILELGDGVFEVKATAGDNHLGGDDFDQVIIDYLVSQFKQENGIDLSKDKMALQRLKDAAEKAKKELSGVTQTQISLPFISANENGPLHLETTLTRAKFEELSAHLVERTMGPVRQALQDAGLTSADIDKVILVGGSTRIPAVQEAIKRELGKEPHKGVNPDEVVAIGAAIQGGVIAGEVKDIVLLDVTPLSLGIETMGGVFTKLIERNTTIPTSKSQVFTTAADNQTTVDIHVLQGERPMAADNKTLGRFQLTDIPPAPRGVPQIEVTFDIDANGIVHVRAKDLGTNKEQSITIKSSSGLSEEEIQRMIKEAEENAEADRKRKEAADLRNEADQLIFTTEKTVKELEGKVSADEIKKAQEAKDALKAALEKNDLDDIRKKKDALQEAVQQLSIKLYEQAAQQAQQAQSGAADKKDNVVDAEFEEVNDDK</sequence>
<name>DNAK_GEOTN</name>